<name>NU3C_NICTO</name>
<evidence type="ECO:0000255" key="1">
    <source>
        <dbReference type="HAMAP-Rule" id="MF_01394"/>
    </source>
</evidence>
<keyword id="KW-0150">Chloroplast</keyword>
<keyword id="KW-0472">Membrane</keyword>
<keyword id="KW-0520">NAD</keyword>
<keyword id="KW-0521">NADP</keyword>
<keyword id="KW-0934">Plastid</keyword>
<keyword id="KW-0618">Plastoquinone</keyword>
<keyword id="KW-0874">Quinone</keyword>
<keyword id="KW-0793">Thylakoid</keyword>
<keyword id="KW-1278">Translocase</keyword>
<keyword id="KW-0812">Transmembrane</keyword>
<keyword id="KW-1133">Transmembrane helix</keyword>
<keyword id="KW-0813">Transport</keyword>
<gene>
    <name evidence="1" type="primary">ndhC</name>
</gene>
<reference key="1">
    <citation type="journal article" date="2006" name="Mol. Genet. Genomics">
        <title>The chloroplast genome of Nicotiana sylvestris and Nicotiana tomentosiformis: complete sequencing confirms that the Nicotiana sylvestris progenitor is the maternal genome donor of Nicotiana tabacum.</title>
        <authorList>
            <person name="Yukawa M."/>
            <person name="Tsudzuki T."/>
            <person name="Sugiura M."/>
        </authorList>
    </citation>
    <scope>NUCLEOTIDE SEQUENCE [LARGE SCALE GENOMIC DNA]</scope>
</reference>
<geneLocation type="chloroplast"/>
<feature type="chain" id="PRO_0000362854" description="NAD(P)H-quinone oxidoreductase subunit 3, chloroplastic">
    <location>
        <begin position="1"/>
        <end position="120"/>
    </location>
</feature>
<feature type="transmembrane region" description="Helical" evidence="1">
    <location>
        <begin position="9"/>
        <end position="29"/>
    </location>
</feature>
<feature type="transmembrane region" description="Helical" evidence="1">
    <location>
        <begin position="64"/>
        <end position="84"/>
    </location>
</feature>
<feature type="transmembrane region" description="Helical" evidence="1">
    <location>
        <begin position="88"/>
        <end position="108"/>
    </location>
</feature>
<protein>
    <recommendedName>
        <fullName evidence="1">NAD(P)H-quinone oxidoreductase subunit 3, chloroplastic</fullName>
        <ecNumber evidence="1">7.1.1.-</ecNumber>
    </recommendedName>
    <alternativeName>
        <fullName evidence="1">NAD(P)H dehydrogenase subunit 3</fullName>
    </alternativeName>
    <alternativeName>
        <fullName evidence="1">NADH-plastoquinone oxidoreductase subunit 3</fullName>
    </alternativeName>
</protein>
<proteinExistence type="inferred from homology"/>
<sequence length="120" mass="13917">MFLLYEYDFFWAFLIISILVPILAFLISGVLAPISKGPEKLSTYESGIEPMGDAWLQFRIRYYMFALVFVVFDVETVFLYPWAMSFDVLGVSVFIEAFIFVLILIIGLVYAWRKGALEWS</sequence>
<accession>Q33C29</accession>
<organism>
    <name type="scientific">Nicotiana tomentosiformis</name>
    <name type="common">Tobacco</name>
    <dbReference type="NCBI Taxonomy" id="4098"/>
    <lineage>
        <taxon>Eukaryota</taxon>
        <taxon>Viridiplantae</taxon>
        <taxon>Streptophyta</taxon>
        <taxon>Embryophyta</taxon>
        <taxon>Tracheophyta</taxon>
        <taxon>Spermatophyta</taxon>
        <taxon>Magnoliopsida</taxon>
        <taxon>eudicotyledons</taxon>
        <taxon>Gunneridae</taxon>
        <taxon>Pentapetalae</taxon>
        <taxon>asterids</taxon>
        <taxon>lamiids</taxon>
        <taxon>Solanales</taxon>
        <taxon>Solanaceae</taxon>
        <taxon>Nicotianoideae</taxon>
        <taxon>Nicotianeae</taxon>
        <taxon>Nicotiana</taxon>
    </lineage>
</organism>
<comment type="function">
    <text evidence="1">NDH shuttles electrons from NAD(P)H:plastoquinone, via FMN and iron-sulfur (Fe-S) centers, to quinones in the photosynthetic chain and possibly in a chloroplast respiratory chain. The immediate electron acceptor for the enzyme in this species is believed to be plastoquinone. Couples the redox reaction to proton translocation, and thus conserves the redox energy in a proton gradient.</text>
</comment>
<comment type="catalytic activity">
    <reaction evidence="1">
        <text>a plastoquinone + NADH + (n+1) H(+)(in) = a plastoquinol + NAD(+) + n H(+)(out)</text>
        <dbReference type="Rhea" id="RHEA:42608"/>
        <dbReference type="Rhea" id="RHEA-COMP:9561"/>
        <dbReference type="Rhea" id="RHEA-COMP:9562"/>
        <dbReference type="ChEBI" id="CHEBI:15378"/>
        <dbReference type="ChEBI" id="CHEBI:17757"/>
        <dbReference type="ChEBI" id="CHEBI:57540"/>
        <dbReference type="ChEBI" id="CHEBI:57945"/>
        <dbReference type="ChEBI" id="CHEBI:62192"/>
    </reaction>
</comment>
<comment type="catalytic activity">
    <reaction evidence="1">
        <text>a plastoquinone + NADPH + (n+1) H(+)(in) = a plastoquinol + NADP(+) + n H(+)(out)</text>
        <dbReference type="Rhea" id="RHEA:42612"/>
        <dbReference type="Rhea" id="RHEA-COMP:9561"/>
        <dbReference type="Rhea" id="RHEA-COMP:9562"/>
        <dbReference type="ChEBI" id="CHEBI:15378"/>
        <dbReference type="ChEBI" id="CHEBI:17757"/>
        <dbReference type="ChEBI" id="CHEBI:57783"/>
        <dbReference type="ChEBI" id="CHEBI:58349"/>
        <dbReference type="ChEBI" id="CHEBI:62192"/>
    </reaction>
</comment>
<comment type="subunit">
    <text evidence="1">NDH is composed of at least 16 different subunits, 5 of which are encoded in the nucleus.</text>
</comment>
<comment type="subcellular location">
    <subcellularLocation>
        <location evidence="1">Plastid</location>
        <location evidence="1">Chloroplast thylakoid membrane</location>
        <topology evidence="1">Multi-pass membrane protein</topology>
    </subcellularLocation>
</comment>
<comment type="similarity">
    <text evidence="1">Belongs to the complex I subunit 3 family.</text>
</comment>
<dbReference type="EC" id="7.1.1.-" evidence="1"/>
<dbReference type="EMBL" id="AB240139">
    <property type="protein sequence ID" value="BAE48006.1"/>
    <property type="molecule type" value="Genomic_DNA"/>
</dbReference>
<dbReference type="RefSeq" id="YP_398868.1">
    <property type="nucleotide sequence ID" value="NC_007602.1"/>
</dbReference>
<dbReference type="SMR" id="Q33C29"/>
<dbReference type="GeneID" id="3776349"/>
<dbReference type="KEGG" id="nto:3776349"/>
<dbReference type="OrthoDB" id="154075at2759"/>
<dbReference type="GO" id="GO:0009535">
    <property type="term" value="C:chloroplast thylakoid membrane"/>
    <property type="evidence" value="ECO:0007669"/>
    <property type="project" value="UniProtKB-SubCell"/>
</dbReference>
<dbReference type="GO" id="GO:0030964">
    <property type="term" value="C:NADH dehydrogenase complex"/>
    <property type="evidence" value="ECO:0007669"/>
    <property type="project" value="TreeGrafter"/>
</dbReference>
<dbReference type="GO" id="GO:0008137">
    <property type="term" value="F:NADH dehydrogenase (ubiquinone) activity"/>
    <property type="evidence" value="ECO:0007669"/>
    <property type="project" value="InterPro"/>
</dbReference>
<dbReference type="GO" id="GO:0048038">
    <property type="term" value="F:quinone binding"/>
    <property type="evidence" value="ECO:0007669"/>
    <property type="project" value="UniProtKB-KW"/>
</dbReference>
<dbReference type="GO" id="GO:0019684">
    <property type="term" value="P:photosynthesis, light reaction"/>
    <property type="evidence" value="ECO:0007669"/>
    <property type="project" value="UniProtKB-UniRule"/>
</dbReference>
<dbReference type="FunFam" id="1.20.58.1610:FF:000001">
    <property type="entry name" value="NAD(P)H-quinone oxidoreductase subunit 3, chloroplastic"/>
    <property type="match status" value="1"/>
</dbReference>
<dbReference type="Gene3D" id="1.20.58.1610">
    <property type="entry name" value="NADH:ubiquinone/plastoquinone oxidoreductase, chain 3"/>
    <property type="match status" value="1"/>
</dbReference>
<dbReference type="HAMAP" id="MF_01394">
    <property type="entry name" value="NDH1_NuoA"/>
    <property type="match status" value="1"/>
</dbReference>
<dbReference type="InterPro" id="IPR023043">
    <property type="entry name" value="NAD(P)H_OxRDtase_bac/plastid"/>
</dbReference>
<dbReference type="InterPro" id="IPR000440">
    <property type="entry name" value="NADH_UbQ/plastoQ_OxRdtase_su3"/>
</dbReference>
<dbReference type="InterPro" id="IPR038430">
    <property type="entry name" value="NDAH_ubi_oxred_su3_sf"/>
</dbReference>
<dbReference type="PANTHER" id="PTHR11058">
    <property type="entry name" value="NADH-UBIQUINONE OXIDOREDUCTASE CHAIN 3"/>
    <property type="match status" value="1"/>
</dbReference>
<dbReference type="PANTHER" id="PTHR11058:SF9">
    <property type="entry name" value="NADH-UBIQUINONE OXIDOREDUCTASE CHAIN 3"/>
    <property type="match status" value="1"/>
</dbReference>
<dbReference type="Pfam" id="PF00507">
    <property type="entry name" value="Oxidored_q4"/>
    <property type="match status" value="1"/>
</dbReference>